<proteinExistence type="evidence at protein level"/>
<accession>Q7K734</accession>
<accession>Q9U0K1</accession>
<dbReference type="EC" id="3.1.-.-" evidence="1"/>
<dbReference type="EMBL" id="AF093702">
    <property type="protein sequence ID" value="AAG37989.1"/>
    <property type="molecule type" value="Genomic_DNA"/>
</dbReference>
<dbReference type="EMBL" id="AL844503">
    <property type="protein sequence ID" value="CAB62862.1"/>
    <property type="molecule type" value="Genomic_DNA"/>
</dbReference>
<dbReference type="RefSeq" id="XP_001351399.1">
    <property type="nucleotide sequence ID" value="XM_001351363.1"/>
</dbReference>
<dbReference type="SMR" id="Q7K734"/>
<dbReference type="BioGRID" id="1207701">
    <property type="interactions" value="1"/>
</dbReference>
<dbReference type="FunCoup" id="Q7K734">
    <property type="interactions" value="601"/>
</dbReference>
<dbReference type="IntAct" id="Q7K734">
    <property type="interactions" value="1"/>
</dbReference>
<dbReference type="STRING" id="36329.Q7K734"/>
<dbReference type="PaxDb" id="5833-PFD0420c"/>
<dbReference type="EnsemblProtists" id="CAB62862">
    <property type="protein sequence ID" value="CAB62862"/>
    <property type="gene ID" value="PF3D7_0408500"/>
</dbReference>
<dbReference type="GeneID" id="812356"/>
<dbReference type="KEGG" id="pfa:PF3D7_0408500"/>
<dbReference type="VEuPathDB" id="PlasmoDB:PF3D7_0408500"/>
<dbReference type="HOGENOM" id="CLU_032444_1_0_1"/>
<dbReference type="InParanoid" id="Q7K734"/>
<dbReference type="OMA" id="DVTFEMC"/>
<dbReference type="OrthoDB" id="1937206at2759"/>
<dbReference type="PhylomeDB" id="Q7K734"/>
<dbReference type="Reactome" id="R-PFA-5651801">
    <property type="pathway name" value="PCNA-Dependent Long Patch Base Excision Repair"/>
</dbReference>
<dbReference type="Reactome" id="R-PFA-69166">
    <property type="pathway name" value="Removal of the Flap Intermediate"/>
</dbReference>
<dbReference type="Proteomes" id="UP000001450">
    <property type="component" value="Chromosome 4"/>
</dbReference>
<dbReference type="GO" id="GO:0005739">
    <property type="term" value="C:mitochondrion"/>
    <property type="evidence" value="ECO:0007669"/>
    <property type="project" value="UniProtKB-SubCell"/>
</dbReference>
<dbReference type="GO" id="GO:0005730">
    <property type="term" value="C:nucleolus"/>
    <property type="evidence" value="ECO:0007669"/>
    <property type="project" value="UniProtKB-SubCell"/>
</dbReference>
<dbReference type="GO" id="GO:0005654">
    <property type="term" value="C:nucleoplasm"/>
    <property type="evidence" value="ECO:0007669"/>
    <property type="project" value="UniProtKB-SubCell"/>
</dbReference>
<dbReference type="GO" id="GO:0008409">
    <property type="term" value="F:5'-3' exonuclease activity"/>
    <property type="evidence" value="ECO:0000318"/>
    <property type="project" value="GO_Central"/>
</dbReference>
<dbReference type="GO" id="GO:0017108">
    <property type="term" value="F:5'-flap endonuclease activity"/>
    <property type="evidence" value="ECO:0000318"/>
    <property type="project" value="GO_Central"/>
</dbReference>
<dbReference type="GO" id="GO:0003677">
    <property type="term" value="F:DNA binding"/>
    <property type="evidence" value="ECO:0007669"/>
    <property type="project" value="UniProtKB-UniRule"/>
</dbReference>
<dbReference type="GO" id="GO:0004520">
    <property type="term" value="F:DNA endonuclease activity"/>
    <property type="evidence" value="ECO:0000314"/>
    <property type="project" value="GeneDB"/>
</dbReference>
<dbReference type="GO" id="GO:0048256">
    <property type="term" value="F:flap endonuclease activity"/>
    <property type="evidence" value="ECO:0000314"/>
    <property type="project" value="GeneDB"/>
</dbReference>
<dbReference type="GO" id="GO:0000287">
    <property type="term" value="F:magnesium ion binding"/>
    <property type="evidence" value="ECO:0007669"/>
    <property type="project" value="UniProtKB-UniRule"/>
</dbReference>
<dbReference type="GO" id="GO:0006284">
    <property type="term" value="P:base-excision repair"/>
    <property type="evidence" value="ECO:0007669"/>
    <property type="project" value="UniProtKB-UniRule"/>
</dbReference>
<dbReference type="GO" id="GO:0043137">
    <property type="term" value="P:DNA replication, removal of RNA primer"/>
    <property type="evidence" value="ECO:0007669"/>
    <property type="project" value="UniProtKB-UniRule"/>
</dbReference>
<dbReference type="CDD" id="cd09907">
    <property type="entry name" value="H3TH_FEN1-Euk"/>
    <property type="match status" value="1"/>
</dbReference>
<dbReference type="CDD" id="cd09867">
    <property type="entry name" value="PIN_FEN1"/>
    <property type="match status" value="1"/>
</dbReference>
<dbReference type="FunFam" id="1.10.150.20:FF:000009">
    <property type="entry name" value="Flap endonuclease 1"/>
    <property type="match status" value="1"/>
</dbReference>
<dbReference type="FunFam" id="3.40.50.1010:FF:000016">
    <property type="entry name" value="Flap endonuclease 1"/>
    <property type="match status" value="1"/>
</dbReference>
<dbReference type="Gene3D" id="1.10.150.20">
    <property type="entry name" value="5' to 3' exonuclease, C-terminal subdomain"/>
    <property type="match status" value="1"/>
</dbReference>
<dbReference type="Gene3D" id="3.40.50.1010">
    <property type="entry name" value="5'-nuclease"/>
    <property type="match status" value="1"/>
</dbReference>
<dbReference type="HAMAP" id="MF_00614">
    <property type="entry name" value="Fen"/>
    <property type="match status" value="1"/>
</dbReference>
<dbReference type="InterPro" id="IPR002421">
    <property type="entry name" value="5-3_exonuclease"/>
</dbReference>
<dbReference type="InterPro" id="IPR036279">
    <property type="entry name" value="5-3_exonuclease_C_sf"/>
</dbReference>
<dbReference type="InterPro" id="IPR023426">
    <property type="entry name" value="Flap_endonuc"/>
</dbReference>
<dbReference type="InterPro" id="IPR008918">
    <property type="entry name" value="HhH2"/>
</dbReference>
<dbReference type="InterPro" id="IPR029060">
    <property type="entry name" value="PIN-like_dom_sf"/>
</dbReference>
<dbReference type="InterPro" id="IPR006086">
    <property type="entry name" value="XPG-I_dom"/>
</dbReference>
<dbReference type="InterPro" id="IPR006084">
    <property type="entry name" value="XPG/Rad2"/>
</dbReference>
<dbReference type="InterPro" id="IPR019974">
    <property type="entry name" value="XPG_CS"/>
</dbReference>
<dbReference type="InterPro" id="IPR006085">
    <property type="entry name" value="XPG_DNA_repair_N"/>
</dbReference>
<dbReference type="PANTHER" id="PTHR11081:SF9">
    <property type="entry name" value="FLAP ENDONUCLEASE 1"/>
    <property type="match status" value="1"/>
</dbReference>
<dbReference type="PANTHER" id="PTHR11081">
    <property type="entry name" value="FLAP ENDONUCLEASE FAMILY MEMBER"/>
    <property type="match status" value="1"/>
</dbReference>
<dbReference type="Pfam" id="PF00867">
    <property type="entry name" value="XPG_I"/>
    <property type="match status" value="1"/>
</dbReference>
<dbReference type="Pfam" id="PF00752">
    <property type="entry name" value="XPG_N"/>
    <property type="match status" value="1"/>
</dbReference>
<dbReference type="PRINTS" id="PR00853">
    <property type="entry name" value="XPGRADSUPER"/>
</dbReference>
<dbReference type="SMART" id="SM00475">
    <property type="entry name" value="53EXOc"/>
    <property type="match status" value="1"/>
</dbReference>
<dbReference type="SMART" id="SM00279">
    <property type="entry name" value="HhH2"/>
    <property type="match status" value="1"/>
</dbReference>
<dbReference type="SMART" id="SM00484">
    <property type="entry name" value="XPGI"/>
    <property type="match status" value="1"/>
</dbReference>
<dbReference type="SMART" id="SM00485">
    <property type="entry name" value="XPGN"/>
    <property type="match status" value="1"/>
</dbReference>
<dbReference type="SUPFAM" id="SSF47807">
    <property type="entry name" value="5' to 3' exonuclease, C-terminal subdomain"/>
    <property type="match status" value="1"/>
</dbReference>
<dbReference type="SUPFAM" id="SSF88723">
    <property type="entry name" value="PIN domain-like"/>
    <property type="match status" value="1"/>
</dbReference>
<dbReference type="PROSITE" id="PS00841">
    <property type="entry name" value="XPG_1"/>
    <property type="match status" value="1"/>
</dbReference>
<sequence length="672" mass="76681">MGIKGLTKFIADAAPNAIKEIKIESLMGRIIAIDASMSLYQFIIAIRDSEQYGNLTNESGETTSHISGLMSRSIRLMENGLKPIYVFDGAPPELKGSELEKRGEKRQKAEELLKKAKEEGNLEEIKKQSGRTVRVTRKQNEEAKKLLTLMGIPIIEAPCEAESQCAFLTKYNLAHATATEDADALVFGTKILIRNLNANATSNQNKNKNNSKRGYILTEINLEQVLKGLNLTMDEFIDFCILCGCDYCDTIKGIGSKTAYNLIKEYNCIEKIIENIDQNKYQVPSNFRFQEARKSFINPNVLPKEDIKIDWNEPQIEELKHFLIKDYNFNELRVTNYINRLLKARKVTTQRRLDNFFTACTKKSTKLIVEETKKEQTLPARKGKKRPTAGDKNKQKAVKRKIEQANANGHHKMKEENKSVDNEKNEDGIKSVDNEKNEDGIKSVDDEKNLDDEKNLDDEKNKDDEKNKDDEKNKDDEKNKDDEKNKDDEKKSLDNFSSNLFDSDKESESGNIIKNEKQNMDDEKINDNLPSLFGDHSRIRHTENKDNISDINNNNNNNNSSSNNNNISNNHFNSVSSNSTFNSSTKLKSEDTLKSNSPLKEDSPNSYNNIKNNNHTININSQINNHKEPISNNNLNNINNSTEIKKKNTLFLLPFCPKDVTNVKKKKYTQRC</sequence>
<keyword id="KW-0227">DNA damage</keyword>
<keyword id="KW-0234">DNA repair</keyword>
<keyword id="KW-0235">DNA replication</keyword>
<keyword id="KW-0255">Endonuclease</keyword>
<keyword id="KW-0269">Exonuclease</keyword>
<keyword id="KW-0378">Hydrolase</keyword>
<keyword id="KW-0460">Magnesium</keyword>
<keyword id="KW-0479">Metal-binding</keyword>
<keyword id="KW-0496">Mitochondrion</keyword>
<keyword id="KW-0540">Nuclease</keyword>
<keyword id="KW-0539">Nucleus</keyword>
<keyword id="KW-0597">Phosphoprotein</keyword>
<keyword id="KW-1185">Reference proteome</keyword>
<reference key="1">
    <citation type="submission" date="1998-09" db="EMBL/GenBank/DDBJ databases">
        <title>Characterization of the flap endonuclease 1 homolog from the human malaria parasite Plasmodium falciparum.</title>
        <authorList>
            <person name="Li J.-L."/>
        </authorList>
    </citation>
    <scope>NUCLEOTIDE SEQUENCE [GENOMIC DNA]</scope>
    <source>
        <strain>3D7A</strain>
    </source>
</reference>
<reference key="2">
    <citation type="journal article" date="2002" name="Nature">
        <title>Genome sequence of the human malaria parasite Plasmodium falciparum.</title>
        <authorList>
            <person name="Gardner M.J."/>
            <person name="Hall N."/>
            <person name="Fung E."/>
            <person name="White O."/>
            <person name="Berriman M."/>
            <person name="Hyman R.W."/>
            <person name="Carlton J.M."/>
            <person name="Pain A."/>
            <person name="Nelson K.E."/>
            <person name="Bowman S."/>
            <person name="Paulsen I.T."/>
            <person name="James K.D."/>
            <person name="Eisen J.A."/>
            <person name="Rutherford K.M."/>
            <person name="Salzberg S.L."/>
            <person name="Craig A."/>
            <person name="Kyes S."/>
            <person name="Chan M.-S."/>
            <person name="Nene V."/>
            <person name="Shallom S.J."/>
            <person name="Suh B."/>
            <person name="Peterson J."/>
            <person name="Angiuoli S."/>
            <person name="Pertea M."/>
            <person name="Allen J."/>
            <person name="Selengut J."/>
            <person name="Haft D."/>
            <person name="Mather M.W."/>
            <person name="Vaidya A.B."/>
            <person name="Martin D.M.A."/>
            <person name="Fairlamb A.H."/>
            <person name="Fraunholz M.J."/>
            <person name="Roos D.S."/>
            <person name="Ralph S.A."/>
            <person name="McFadden G.I."/>
            <person name="Cummings L.M."/>
            <person name="Subramanian G.M."/>
            <person name="Mungall C."/>
            <person name="Venter J.C."/>
            <person name="Carucci D.J."/>
            <person name="Hoffman S.L."/>
            <person name="Newbold C."/>
            <person name="Davis R.W."/>
            <person name="Fraser C.M."/>
            <person name="Barrell B.G."/>
        </authorList>
    </citation>
    <scope>NUCLEOTIDE SEQUENCE [LARGE SCALE GENOMIC DNA]</scope>
    <source>
        <strain>3D7</strain>
    </source>
</reference>
<reference key="3">
    <citation type="journal article" date="2002" name="Nature">
        <title>Sequence of Plasmodium falciparum chromosomes 1, 3-9 and 13.</title>
        <authorList>
            <person name="Hall N."/>
            <person name="Pain A."/>
            <person name="Berriman M."/>
            <person name="Churcher C.M."/>
            <person name="Harris B."/>
            <person name="Harris D."/>
            <person name="Mungall K.L."/>
            <person name="Bowman S."/>
            <person name="Atkin R."/>
            <person name="Baker S."/>
            <person name="Barron A."/>
            <person name="Brooks K."/>
            <person name="Buckee C.O."/>
            <person name="Burrows C."/>
            <person name="Cherevach I."/>
            <person name="Chillingworth C."/>
            <person name="Chillingworth T."/>
            <person name="Christodoulou Z."/>
            <person name="Clark L."/>
            <person name="Clark R."/>
            <person name="Corton C."/>
            <person name="Cronin A."/>
            <person name="Davies R.M."/>
            <person name="Davis P."/>
            <person name="Dear P."/>
            <person name="Dearden F."/>
            <person name="Doggett J."/>
            <person name="Feltwell T."/>
            <person name="Goble A."/>
            <person name="Goodhead I."/>
            <person name="Gwilliam R."/>
            <person name="Hamlin N."/>
            <person name="Hance Z."/>
            <person name="Harper D."/>
            <person name="Hauser H."/>
            <person name="Hornsby T."/>
            <person name="Holroyd S."/>
            <person name="Horrocks P."/>
            <person name="Humphray S."/>
            <person name="Jagels K."/>
            <person name="James K.D."/>
            <person name="Johnson D."/>
            <person name="Kerhornou A."/>
            <person name="Knights A."/>
            <person name="Konfortov B."/>
            <person name="Kyes S."/>
            <person name="Larke N."/>
            <person name="Lawson D."/>
            <person name="Lennard N."/>
            <person name="Line A."/>
            <person name="Maddison M."/>
            <person name="Mclean J."/>
            <person name="Mooney P."/>
            <person name="Moule S."/>
            <person name="Murphy L."/>
            <person name="Oliver K."/>
            <person name="Ormond D."/>
            <person name="Price C."/>
            <person name="Quail M.A."/>
            <person name="Rabbinowitsch E."/>
            <person name="Rajandream M.A."/>
            <person name="Rutter S."/>
            <person name="Rutherford K.M."/>
            <person name="Sanders M."/>
            <person name="Simmonds M."/>
            <person name="Seeger K."/>
            <person name="Sharp S."/>
            <person name="Smith R."/>
            <person name="Squares R."/>
            <person name="Squares S."/>
            <person name="Stevens K."/>
            <person name="Taylor K."/>
            <person name="Tivey A."/>
            <person name="Unwin L."/>
            <person name="Whitehead S."/>
            <person name="Woodward J.R."/>
            <person name="Sulston J.E."/>
            <person name="Craig A."/>
            <person name="Newbold C."/>
            <person name="Barrell B.G."/>
        </authorList>
    </citation>
    <scope>NUCLEOTIDE SEQUENCE [LARGE SCALE GENOMIC DNA]</scope>
    <source>
        <strain>3D7</strain>
    </source>
</reference>
<reference key="4">
    <citation type="journal article" date="2015" name="Biochem. J.">
        <title>Functional dissection of proliferating-cell nuclear antigens (1 and 2) in human malarial parasite Plasmodium falciparum: possible involvement in DNA replication and DNA damage response.</title>
        <authorList>
            <person name="Mitra P."/>
            <person name="Banu K."/>
            <person name="Deshmukh A.S."/>
            <person name="Subbarao N."/>
            <person name="Dhar S.K."/>
        </authorList>
    </citation>
    <scope>INTERACTION WITH PCNA1 AND PCNA2</scope>
</reference>
<gene>
    <name evidence="1" type="primary">FEN1</name>
    <name type="ORF">PF3D7_0408500</name>
    <name type="ORF">PFD0420c</name>
</gene>
<protein>
    <recommendedName>
        <fullName evidence="1">Flap endonuclease 1</fullName>
        <shortName evidence="1">FEN-1</shortName>
        <ecNumber evidence="1">3.1.-.-</ecNumber>
    </recommendedName>
    <alternativeName>
        <fullName evidence="1">Flap structure-specific endonuclease 1</fullName>
    </alternativeName>
</protein>
<feature type="chain" id="PRO_0000403539" description="Flap endonuclease 1">
    <location>
        <begin position="1"/>
        <end position="672"/>
    </location>
</feature>
<feature type="region of interest" description="N-domain">
    <location>
        <begin position="1"/>
        <end position="106"/>
    </location>
</feature>
<feature type="region of interest" description="I-domain">
    <location>
        <begin position="124"/>
        <end position="266"/>
    </location>
</feature>
<feature type="region of interest" description="Interaction with PCNA" evidence="1">
    <location>
        <begin position="349"/>
        <end position="357"/>
    </location>
</feature>
<feature type="region of interest" description="Disordered" evidence="2">
    <location>
        <begin position="371"/>
        <end position="610"/>
    </location>
</feature>
<feature type="compositionally biased region" description="Basic and acidic residues" evidence="2">
    <location>
        <begin position="413"/>
        <end position="493"/>
    </location>
</feature>
<feature type="compositionally biased region" description="Basic and acidic residues" evidence="2">
    <location>
        <begin position="502"/>
        <end position="526"/>
    </location>
</feature>
<feature type="compositionally biased region" description="Basic and acidic residues" evidence="2">
    <location>
        <begin position="535"/>
        <end position="548"/>
    </location>
</feature>
<feature type="compositionally biased region" description="Low complexity" evidence="2">
    <location>
        <begin position="549"/>
        <end position="584"/>
    </location>
</feature>
<feature type="compositionally biased region" description="Basic and acidic residues" evidence="2">
    <location>
        <begin position="587"/>
        <end position="603"/>
    </location>
</feature>
<feature type="binding site" evidence="1">
    <location>
        <position position="34"/>
    </location>
    <ligand>
        <name>Mg(2+)</name>
        <dbReference type="ChEBI" id="CHEBI:18420"/>
        <label>1</label>
    </ligand>
</feature>
<feature type="binding site" evidence="1">
    <location>
        <position position="47"/>
    </location>
    <ligand>
        <name>DNA</name>
        <dbReference type="ChEBI" id="CHEBI:16991"/>
    </ligand>
</feature>
<feature type="binding site" evidence="1">
    <location>
        <position position="72"/>
    </location>
    <ligand>
        <name>DNA</name>
        <dbReference type="ChEBI" id="CHEBI:16991"/>
    </ligand>
</feature>
<feature type="binding site" evidence="1">
    <location>
        <position position="88"/>
    </location>
    <ligand>
        <name>Mg(2+)</name>
        <dbReference type="ChEBI" id="CHEBI:18420"/>
        <label>1</label>
    </ligand>
</feature>
<feature type="binding site" evidence="1">
    <location>
        <position position="160"/>
    </location>
    <ligand>
        <name>DNA</name>
        <dbReference type="ChEBI" id="CHEBI:16991"/>
    </ligand>
</feature>
<feature type="binding site" evidence="1">
    <location>
        <position position="160"/>
    </location>
    <ligand>
        <name>Mg(2+)</name>
        <dbReference type="ChEBI" id="CHEBI:18420"/>
        <label>1</label>
    </ligand>
</feature>
<feature type="binding site" evidence="1">
    <location>
        <position position="162"/>
    </location>
    <ligand>
        <name>Mg(2+)</name>
        <dbReference type="ChEBI" id="CHEBI:18420"/>
        <label>1</label>
    </ligand>
</feature>
<feature type="binding site" evidence="1">
    <location>
        <position position="181"/>
    </location>
    <ligand>
        <name>Mg(2+)</name>
        <dbReference type="ChEBI" id="CHEBI:18420"/>
        <label>2</label>
    </ligand>
</feature>
<feature type="binding site" evidence="1">
    <location>
        <position position="183"/>
    </location>
    <ligand>
        <name>Mg(2+)</name>
        <dbReference type="ChEBI" id="CHEBI:18420"/>
        <label>2</label>
    </ligand>
</feature>
<feature type="binding site" evidence="1">
    <location>
        <position position="244"/>
    </location>
    <ligand>
        <name>DNA</name>
        <dbReference type="ChEBI" id="CHEBI:16991"/>
    </ligand>
</feature>
<feature type="binding site" evidence="1">
    <location>
        <position position="246"/>
    </location>
    <ligand>
        <name>DNA</name>
        <dbReference type="ChEBI" id="CHEBI:16991"/>
    </ligand>
</feature>
<feature type="binding site" evidence="1">
    <location>
        <position position="246"/>
    </location>
    <ligand>
        <name>Mg(2+)</name>
        <dbReference type="ChEBI" id="CHEBI:18420"/>
        <label>2</label>
    </ligand>
</feature>
<organism>
    <name type="scientific">Plasmodium falciparum (isolate 3D7)</name>
    <dbReference type="NCBI Taxonomy" id="36329"/>
    <lineage>
        <taxon>Eukaryota</taxon>
        <taxon>Sar</taxon>
        <taxon>Alveolata</taxon>
        <taxon>Apicomplexa</taxon>
        <taxon>Aconoidasida</taxon>
        <taxon>Haemosporida</taxon>
        <taxon>Plasmodiidae</taxon>
        <taxon>Plasmodium</taxon>
        <taxon>Plasmodium (Laverania)</taxon>
    </lineage>
</organism>
<comment type="function">
    <text evidence="1">Structure-specific nuclease with 5'-flap endonuclease and 5'-3' exonuclease activities involved in DNA replication and repair. During DNA replication, cleaves the 5'-overhanging flap structure that is generated by displacement synthesis when DNA polymerase encounters the 5'-end of a downstream Okazaki fragment. It enters the flap from the 5'-end and then tracks to cleave the flap base, leaving a nick for ligation. Also involved in the long patch base excision repair (LP-BER) pathway, by cleaving within the apurinic/apyrimidinic (AP) site-terminated flap. Acts as a genome stabilization factor that prevents flaps from equilibrating into structures that lead to duplications and deletions. Also possesses 5'-3' exonuclease activity on nicked or gapped double-stranded DNA, and exhibits RNase H activity. Also involved in replication and repair of rDNA and in repairing mitochondrial DNA.</text>
</comment>
<comment type="cofactor">
    <cofactor evidence="1">
        <name>Mg(2+)</name>
        <dbReference type="ChEBI" id="CHEBI:18420"/>
    </cofactor>
    <text evidence="1">Binds 2 magnesium ions per subunit. They probably participate in the reaction catalyzed by the enzyme. May bind an additional third magnesium ion after substrate binding.</text>
</comment>
<comment type="subunit">
    <text evidence="1 3">Interacts with PCNA1 and PCNA2 (PubMed:26251451). Three molecules of FEN1 bind to one PCNA trimer with each molecule binding to one PCNA monomer. PCNA stimulates the nuclease activity without altering cleavage specificity.</text>
</comment>
<comment type="subcellular location">
    <subcellularLocation>
        <location evidence="1">Nucleus</location>
        <location evidence="1">Nucleolus</location>
    </subcellularLocation>
    <subcellularLocation>
        <location evidence="1">Nucleus</location>
        <location evidence="1">Nucleoplasm</location>
    </subcellularLocation>
    <subcellularLocation>
        <location evidence="1">Mitochondrion</location>
    </subcellularLocation>
    <text evidence="1">Resides mostly in the nucleoli and relocalizes to the nucleoplasm upon DNA damage.</text>
</comment>
<comment type="PTM">
    <text evidence="1">Phosphorylated. Phosphorylation upon DNA damage induces relocalization to the nuclear plasma.</text>
</comment>
<comment type="similarity">
    <text evidence="1">Belongs to the XPG/RAD2 endonuclease family. FEN1 subfamily.</text>
</comment>
<evidence type="ECO:0000255" key="1">
    <source>
        <dbReference type="HAMAP-Rule" id="MF_03140"/>
    </source>
</evidence>
<evidence type="ECO:0000256" key="2">
    <source>
        <dbReference type="SAM" id="MobiDB-lite"/>
    </source>
</evidence>
<evidence type="ECO:0000269" key="3">
    <source>
    </source>
</evidence>
<name>FEN1_PLAF7</name>